<proteinExistence type="inferred from homology"/>
<comment type="function">
    <text evidence="1">Catalyzes the reduction of FMN to FMNH2 which is used to reduce pyrimidine by RutA via the Rut pathway.</text>
</comment>
<comment type="catalytic activity">
    <reaction evidence="1">
        <text>FMNH2 + NAD(+) = FMN + NADH + 2 H(+)</text>
        <dbReference type="Rhea" id="RHEA:21620"/>
        <dbReference type="ChEBI" id="CHEBI:15378"/>
        <dbReference type="ChEBI" id="CHEBI:57540"/>
        <dbReference type="ChEBI" id="CHEBI:57618"/>
        <dbReference type="ChEBI" id="CHEBI:57945"/>
        <dbReference type="ChEBI" id="CHEBI:58210"/>
        <dbReference type="EC" id="1.5.1.42"/>
    </reaction>
</comment>
<comment type="similarity">
    <text evidence="1">Belongs to the non-flavoprotein flavin reductase family. RutF subfamily.</text>
</comment>
<name>RUTF2_RHIR8</name>
<keyword id="KW-0285">Flavoprotein</keyword>
<keyword id="KW-0288">FMN</keyword>
<keyword id="KW-0520">NAD</keyword>
<keyword id="KW-0560">Oxidoreductase</keyword>
<dbReference type="EC" id="1.5.1.42" evidence="1"/>
<dbReference type="EMBL" id="CP000629">
    <property type="protein sequence ID" value="ACM28649.1"/>
    <property type="molecule type" value="Genomic_DNA"/>
</dbReference>
<dbReference type="RefSeq" id="WP_012649155.1">
    <property type="nucleotide sequence ID" value="NC_011983.1"/>
</dbReference>
<dbReference type="SMR" id="B9JLT5"/>
<dbReference type="STRING" id="311403.Arad_7069"/>
<dbReference type="GeneID" id="86850961"/>
<dbReference type="KEGG" id="ara:Arad_7069"/>
<dbReference type="eggNOG" id="COG1853">
    <property type="taxonomic scope" value="Bacteria"/>
</dbReference>
<dbReference type="HOGENOM" id="CLU_059021_2_2_5"/>
<dbReference type="Proteomes" id="UP000001600">
    <property type="component" value="Chromosome 2"/>
</dbReference>
<dbReference type="GO" id="GO:0010181">
    <property type="term" value="F:FMN binding"/>
    <property type="evidence" value="ECO:0007669"/>
    <property type="project" value="InterPro"/>
</dbReference>
<dbReference type="GO" id="GO:0052874">
    <property type="term" value="F:FMN reductase (NADH) activity"/>
    <property type="evidence" value="ECO:0007669"/>
    <property type="project" value="UniProtKB-EC"/>
</dbReference>
<dbReference type="GO" id="GO:0008752">
    <property type="term" value="F:FMN reductase [NAD(P)H] activity"/>
    <property type="evidence" value="ECO:0007669"/>
    <property type="project" value="InterPro"/>
</dbReference>
<dbReference type="GO" id="GO:0042602">
    <property type="term" value="F:riboflavin reductase (NADPH) activity"/>
    <property type="evidence" value="ECO:0007669"/>
    <property type="project" value="UniProtKB-UniRule"/>
</dbReference>
<dbReference type="GO" id="GO:0019740">
    <property type="term" value="P:nitrogen utilization"/>
    <property type="evidence" value="ECO:0007669"/>
    <property type="project" value="UniProtKB-UniRule"/>
</dbReference>
<dbReference type="GO" id="GO:0006212">
    <property type="term" value="P:uracil catabolic process"/>
    <property type="evidence" value="ECO:0007669"/>
    <property type="project" value="UniProtKB-UniRule"/>
</dbReference>
<dbReference type="Gene3D" id="2.30.110.10">
    <property type="entry name" value="Electron Transport, Fmn-binding Protein, Chain A"/>
    <property type="match status" value="1"/>
</dbReference>
<dbReference type="HAMAP" id="MF_00833">
    <property type="entry name" value="RutF"/>
    <property type="match status" value="1"/>
</dbReference>
<dbReference type="InterPro" id="IPR002563">
    <property type="entry name" value="Flavin_Rdtase-like_dom"/>
</dbReference>
<dbReference type="InterPro" id="IPR050268">
    <property type="entry name" value="NADH-dep_flavin_reductase"/>
</dbReference>
<dbReference type="InterPro" id="IPR019917">
    <property type="entry name" value="RutF"/>
</dbReference>
<dbReference type="InterPro" id="IPR012349">
    <property type="entry name" value="Split_barrel_FMN-bd"/>
</dbReference>
<dbReference type="NCBIfam" id="TIGR03615">
    <property type="entry name" value="RutF"/>
    <property type="match status" value="1"/>
</dbReference>
<dbReference type="PANTHER" id="PTHR30466">
    <property type="entry name" value="FLAVIN REDUCTASE"/>
    <property type="match status" value="1"/>
</dbReference>
<dbReference type="PANTHER" id="PTHR30466:SF1">
    <property type="entry name" value="FMN REDUCTASE (NADH) RUTF"/>
    <property type="match status" value="1"/>
</dbReference>
<dbReference type="Pfam" id="PF01613">
    <property type="entry name" value="Flavin_Reduct"/>
    <property type="match status" value="1"/>
</dbReference>
<dbReference type="SMART" id="SM00903">
    <property type="entry name" value="Flavin_Reduct"/>
    <property type="match status" value="1"/>
</dbReference>
<dbReference type="SUPFAM" id="SSF50475">
    <property type="entry name" value="FMN-binding split barrel"/>
    <property type="match status" value="1"/>
</dbReference>
<feature type="chain" id="PRO_0000402990" description="FMN reductase (NADH) RutF 2">
    <location>
        <begin position="1"/>
        <end position="173"/>
    </location>
</feature>
<organism>
    <name type="scientific">Rhizobium rhizogenes (strain K84 / ATCC BAA-868)</name>
    <name type="common">Agrobacterium radiobacter</name>
    <dbReference type="NCBI Taxonomy" id="311403"/>
    <lineage>
        <taxon>Bacteria</taxon>
        <taxon>Pseudomonadati</taxon>
        <taxon>Pseudomonadota</taxon>
        <taxon>Alphaproteobacteria</taxon>
        <taxon>Hyphomicrobiales</taxon>
        <taxon>Rhizobiaceae</taxon>
        <taxon>Rhizobium/Agrobacterium group</taxon>
        <taxon>Rhizobium</taxon>
    </lineage>
</organism>
<evidence type="ECO:0000255" key="1">
    <source>
        <dbReference type="HAMAP-Rule" id="MF_00833"/>
    </source>
</evidence>
<reference key="1">
    <citation type="journal article" date="2009" name="J. Bacteriol.">
        <title>Genome sequences of three Agrobacterium biovars help elucidate the evolution of multichromosome genomes in bacteria.</title>
        <authorList>
            <person name="Slater S.C."/>
            <person name="Goldman B.S."/>
            <person name="Goodner B."/>
            <person name="Setubal J.C."/>
            <person name="Farrand S.K."/>
            <person name="Nester E.W."/>
            <person name="Burr T.J."/>
            <person name="Banta L."/>
            <person name="Dickerman A.W."/>
            <person name="Paulsen I."/>
            <person name="Otten L."/>
            <person name="Suen G."/>
            <person name="Welch R."/>
            <person name="Almeida N.F."/>
            <person name="Arnold F."/>
            <person name="Burton O.T."/>
            <person name="Du Z."/>
            <person name="Ewing A."/>
            <person name="Godsy E."/>
            <person name="Heisel S."/>
            <person name="Houmiel K.L."/>
            <person name="Jhaveri J."/>
            <person name="Lu J."/>
            <person name="Miller N.M."/>
            <person name="Norton S."/>
            <person name="Chen Q."/>
            <person name="Phoolcharoen W."/>
            <person name="Ohlin V."/>
            <person name="Ondrusek D."/>
            <person name="Pride N."/>
            <person name="Stricklin S.L."/>
            <person name="Sun J."/>
            <person name="Wheeler C."/>
            <person name="Wilson L."/>
            <person name="Zhu H."/>
            <person name="Wood D.W."/>
        </authorList>
    </citation>
    <scope>NUCLEOTIDE SEQUENCE [LARGE SCALE GENOMIC DNA]</scope>
    <source>
        <strain>K84 / ATCC BAA-868</strain>
    </source>
</reference>
<gene>
    <name evidence="1" type="primary">rutF2</name>
    <name type="ordered locus">Arad_7069</name>
</gene>
<protein>
    <recommendedName>
        <fullName evidence="1">FMN reductase (NADH) RutF 2</fullName>
        <ecNumber evidence="1">1.5.1.42</ecNumber>
    </recommendedName>
    <alternativeName>
        <fullName evidence="1">FMN reductase 2</fullName>
    </alternativeName>
    <alternativeName>
        <fullName evidence="1">NADH-flavin reductase RutF 2</fullName>
    </alternativeName>
    <alternativeName>
        <fullName evidence="1">NADH:flavin oxidoreductase 2</fullName>
    </alternativeName>
</protein>
<accession>B9JLT5</accession>
<sequence>MQAPSLTVTAPASPSPDERKQEYRDAMARLGAAVNIVTTDGPGGLAGFAATAVCSVTDSPPTLLVCLNRTSSAYPAVNANRVLCVNTLERGHEDLSRLFGGKTPVHERFEGASWSSLETGAPVLDDALISLDCRVKAISDGGTHDILICDVVAIRENDGGQALIYFDRRYHAI</sequence>